<evidence type="ECO:0000255" key="1">
    <source>
        <dbReference type="HAMAP-Rule" id="MF_00197"/>
    </source>
</evidence>
<proteinExistence type="inferred from homology"/>
<accession>Q83AD4</accession>
<sequence>MKVNFTKMQGSGNDFVVIDATKTPFQLTTSQIQKMANRRFGVGFDQLLVIEPPKNNSVDFHFRIFNADGSEVGQCGNGARCIARFIRAHQLSDREELRVSTLNEVLELKIQPDGKVSVKMGVPRFEPTEIPFIASGVANFYDIAVDNQIVKLGVVNIGNPHAIIPVERINAEEVGKLGARLSVHECFPEGANVGFMQVIDPQNIRLRVYERGTGETLACGSNACAAVAVGRRCGLLQERVVVSQPGGSLTIDWQGPLTPVTMTGPATTVFCGEWLD</sequence>
<comment type="function">
    <text evidence="1">Catalyzes the stereoinversion of LL-2,6-diaminopimelate (L,L-DAP) to meso-diaminopimelate (meso-DAP), a precursor of L-lysine and an essential component of the bacterial peptidoglycan.</text>
</comment>
<comment type="catalytic activity">
    <reaction evidence="1">
        <text>(2S,6S)-2,6-diaminopimelate = meso-2,6-diaminopimelate</text>
        <dbReference type="Rhea" id="RHEA:15393"/>
        <dbReference type="ChEBI" id="CHEBI:57609"/>
        <dbReference type="ChEBI" id="CHEBI:57791"/>
        <dbReference type="EC" id="5.1.1.7"/>
    </reaction>
</comment>
<comment type="pathway">
    <text evidence="1">Amino-acid biosynthesis; L-lysine biosynthesis via DAP pathway; DL-2,6-diaminopimelate from LL-2,6-diaminopimelate: step 1/1.</text>
</comment>
<comment type="subunit">
    <text evidence="1">Homodimer.</text>
</comment>
<comment type="subcellular location">
    <subcellularLocation>
        <location evidence="1">Cytoplasm</location>
    </subcellularLocation>
</comment>
<comment type="similarity">
    <text evidence="1">Belongs to the diaminopimelate epimerase family.</text>
</comment>
<feature type="chain" id="PRO_1000011873" description="Diaminopimelate epimerase">
    <location>
        <begin position="1"/>
        <end position="276"/>
    </location>
</feature>
<feature type="active site" description="Proton donor" evidence="1">
    <location>
        <position position="75"/>
    </location>
</feature>
<feature type="active site" description="Proton acceptor" evidence="1">
    <location>
        <position position="219"/>
    </location>
</feature>
<feature type="binding site" evidence="1">
    <location>
        <position position="13"/>
    </location>
    <ligand>
        <name>substrate</name>
    </ligand>
</feature>
<feature type="binding site" evidence="1">
    <location>
        <position position="46"/>
    </location>
    <ligand>
        <name>substrate</name>
    </ligand>
</feature>
<feature type="binding site" evidence="1">
    <location>
        <position position="66"/>
    </location>
    <ligand>
        <name>substrate</name>
    </ligand>
</feature>
<feature type="binding site" evidence="1">
    <location>
        <begin position="76"/>
        <end position="77"/>
    </location>
    <ligand>
        <name>substrate</name>
    </ligand>
</feature>
<feature type="binding site" evidence="1">
    <location>
        <position position="159"/>
    </location>
    <ligand>
        <name>substrate</name>
    </ligand>
</feature>
<feature type="binding site" evidence="1">
    <location>
        <position position="192"/>
    </location>
    <ligand>
        <name>substrate</name>
    </ligand>
</feature>
<feature type="binding site" evidence="1">
    <location>
        <begin position="210"/>
        <end position="211"/>
    </location>
    <ligand>
        <name>substrate</name>
    </ligand>
</feature>
<feature type="binding site" evidence="1">
    <location>
        <begin position="220"/>
        <end position="221"/>
    </location>
    <ligand>
        <name>substrate</name>
    </ligand>
</feature>
<feature type="site" description="Could be important to modulate the pK values of the two catalytic cysteine residues" evidence="1">
    <location>
        <position position="161"/>
    </location>
</feature>
<feature type="site" description="Could be important to modulate the pK values of the two catalytic cysteine residues" evidence="1">
    <location>
        <position position="210"/>
    </location>
</feature>
<feature type="site" description="Important for dimerization" evidence="1">
    <location>
        <position position="270"/>
    </location>
</feature>
<keyword id="KW-0028">Amino-acid biosynthesis</keyword>
<keyword id="KW-0963">Cytoplasm</keyword>
<keyword id="KW-0413">Isomerase</keyword>
<keyword id="KW-0457">Lysine biosynthesis</keyword>
<keyword id="KW-1185">Reference proteome</keyword>
<protein>
    <recommendedName>
        <fullName evidence="1">Diaminopimelate epimerase</fullName>
        <shortName evidence="1">DAP epimerase</shortName>
        <ecNumber evidence="1">5.1.1.7</ecNumber>
    </recommendedName>
    <alternativeName>
        <fullName evidence="1">PLP-independent amino acid racemase</fullName>
    </alternativeName>
</protein>
<dbReference type="EC" id="5.1.1.7" evidence="1"/>
<dbReference type="EMBL" id="AE016828">
    <property type="protein sequence ID" value="AAO91459.1"/>
    <property type="molecule type" value="Genomic_DNA"/>
</dbReference>
<dbReference type="RefSeq" id="NP_820945.1">
    <property type="nucleotide sequence ID" value="NC_002971.4"/>
</dbReference>
<dbReference type="RefSeq" id="WP_005769680.1">
    <property type="nucleotide sequence ID" value="NZ_CCYB01000065.1"/>
</dbReference>
<dbReference type="SMR" id="Q83AD4"/>
<dbReference type="STRING" id="227377.CBU_1970"/>
<dbReference type="EnsemblBacteria" id="AAO91459">
    <property type="protein sequence ID" value="AAO91459"/>
    <property type="gene ID" value="CBU_1970"/>
</dbReference>
<dbReference type="GeneID" id="1209883"/>
<dbReference type="KEGG" id="cbu:CBU_1970"/>
<dbReference type="PATRIC" id="fig|227377.7.peg.1958"/>
<dbReference type="eggNOG" id="COG0253">
    <property type="taxonomic scope" value="Bacteria"/>
</dbReference>
<dbReference type="HOGENOM" id="CLU_053306_1_1_6"/>
<dbReference type="OrthoDB" id="9805408at2"/>
<dbReference type="UniPathway" id="UPA00034">
    <property type="reaction ID" value="UER00025"/>
</dbReference>
<dbReference type="Proteomes" id="UP000002671">
    <property type="component" value="Chromosome"/>
</dbReference>
<dbReference type="GO" id="GO:0005829">
    <property type="term" value="C:cytosol"/>
    <property type="evidence" value="ECO:0000318"/>
    <property type="project" value="GO_Central"/>
</dbReference>
<dbReference type="GO" id="GO:0008837">
    <property type="term" value="F:diaminopimelate epimerase activity"/>
    <property type="evidence" value="ECO:0000318"/>
    <property type="project" value="GO_Central"/>
</dbReference>
<dbReference type="GO" id="GO:0009089">
    <property type="term" value="P:lysine biosynthetic process via diaminopimelate"/>
    <property type="evidence" value="ECO:0000318"/>
    <property type="project" value="GO_Central"/>
</dbReference>
<dbReference type="FunFam" id="3.10.310.10:FF:000001">
    <property type="entry name" value="Diaminopimelate epimerase"/>
    <property type="match status" value="1"/>
</dbReference>
<dbReference type="Gene3D" id="3.10.310.10">
    <property type="entry name" value="Diaminopimelate Epimerase, Chain A, domain 1"/>
    <property type="match status" value="2"/>
</dbReference>
<dbReference type="HAMAP" id="MF_00197">
    <property type="entry name" value="DAP_epimerase"/>
    <property type="match status" value="1"/>
</dbReference>
<dbReference type="InterPro" id="IPR018510">
    <property type="entry name" value="DAP_epimerase_AS"/>
</dbReference>
<dbReference type="InterPro" id="IPR001653">
    <property type="entry name" value="DAP_epimerase_DapF"/>
</dbReference>
<dbReference type="NCBIfam" id="TIGR00652">
    <property type="entry name" value="DapF"/>
    <property type="match status" value="1"/>
</dbReference>
<dbReference type="PANTHER" id="PTHR31689:SF0">
    <property type="entry name" value="DIAMINOPIMELATE EPIMERASE"/>
    <property type="match status" value="1"/>
</dbReference>
<dbReference type="PANTHER" id="PTHR31689">
    <property type="entry name" value="DIAMINOPIMELATE EPIMERASE, CHLOROPLASTIC"/>
    <property type="match status" value="1"/>
</dbReference>
<dbReference type="Pfam" id="PF01678">
    <property type="entry name" value="DAP_epimerase"/>
    <property type="match status" value="2"/>
</dbReference>
<dbReference type="SUPFAM" id="SSF54506">
    <property type="entry name" value="Diaminopimelate epimerase-like"/>
    <property type="match status" value="2"/>
</dbReference>
<dbReference type="PROSITE" id="PS01326">
    <property type="entry name" value="DAP_EPIMERASE"/>
    <property type="match status" value="1"/>
</dbReference>
<organism>
    <name type="scientific">Coxiella burnetii (strain RSA 493 / Nine Mile phase I)</name>
    <dbReference type="NCBI Taxonomy" id="227377"/>
    <lineage>
        <taxon>Bacteria</taxon>
        <taxon>Pseudomonadati</taxon>
        <taxon>Pseudomonadota</taxon>
        <taxon>Gammaproteobacteria</taxon>
        <taxon>Legionellales</taxon>
        <taxon>Coxiellaceae</taxon>
        <taxon>Coxiella</taxon>
    </lineage>
</organism>
<name>DAPF_COXBU</name>
<reference key="1">
    <citation type="journal article" date="2003" name="Proc. Natl. Acad. Sci. U.S.A.">
        <title>Complete genome sequence of the Q-fever pathogen, Coxiella burnetii.</title>
        <authorList>
            <person name="Seshadri R."/>
            <person name="Paulsen I.T."/>
            <person name="Eisen J.A."/>
            <person name="Read T.D."/>
            <person name="Nelson K.E."/>
            <person name="Nelson W.C."/>
            <person name="Ward N.L."/>
            <person name="Tettelin H."/>
            <person name="Davidsen T.M."/>
            <person name="Beanan M.J."/>
            <person name="DeBoy R.T."/>
            <person name="Daugherty S.C."/>
            <person name="Brinkac L.M."/>
            <person name="Madupu R."/>
            <person name="Dodson R.J."/>
            <person name="Khouri H.M."/>
            <person name="Lee K.H."/>
            <person name="Carty H.A."/>
            <person name="Scanlan D."/>
            <person name="Heinzen R.A."/>
            <person name="Thompson H.A."/>
            <person name="Samuel J.E."/>
            <person name="Fraser C.M."/>
            <person name="Heidelberg J.F."/>
        </authorList>
    </citation>
    <scope>NUCLEOTIDE SEQUENCE [LARGE SCALE GENOMIC DNA]</scope>
    <source>
        <strain>RSA 493 / Nine Mile phase I</strain>
    </source>
</reference>
<gene>
    <name evidence="1" type="primary">dapF</name>
    <name type="ordered locus">CBU_1970</name>
</gene>